<evidence type="ECO:0000255" key="1">
    <source>
        <dbReference type="HAMAP-Rule" id="MF_01719"/>
    </source>
</evidence>
<feature type="chain" id="PRO_0000270381" description="Methionine import ATP-binding protein MetN 2">
    <location>
        <begin position="1"/>
        <end position="338"/>
    </location>
</feature>
<feature type="domain" description="ABC transporter" evidence="1">
    <location>
        <begin position="2"/>
        <end position="242"/>
    </location>
</feature>
<feature type="binding site" evidence="1">
    <location>
        <begin position="39"/>
        <end position="46"/>
    </location>
    <ligand>
        <name>ATP</name>
        <dbReference type="ChEBI" id="CHEBI:30616"/>
    </ligand>
</feature>
<dbReference type="EC" id="7.4.2.11" evidence="1"/>
<dbReference type="EMBL" id="AE006468">
    <property type="protein sequence ID" value="AAL19465.1"/>
    <property type="molecule type" value="Genomic_DNA"/>
</dbReference>
<dbReference type="SMR" id="Q8ZR89"/>
<dbReference type="STRING" id="99287.STM0511"/>
<dbReference type="PaxDb" id="99287-STM0511"/>
<dbReference type="KEGG" id="stm:STM0511"/>
<dbReference type="PATRIC" id="fig|99287.12.peg.545"/>
<dbReference type="HOGENOM" id="CLU_000604_1_3_6"/>
<dbReference type="OMA" id="VIRKICH"/>
<dbReference type="PhylomeDB" id="Q8ZR89"/>
<dbReference type="BioCyc" id="SENT99287:STM0511-MONOMER"/>
<dbReference type="Proteomes" id="UP000001014">
    <property type="component" value="Chromosome"/>
</dbReference>
<dbReference type="GO" id="GO:0005886">
    <property type="term" value="C:plasma membrane"/>
    <property type="evidence" value="ECO:0007669"/>
    <property type="project" value="UniProtKB-SubCell"/>
</dbReference>
<dbReference type="GO" id="GO:0033232">
    <property type="term" value="F:ABC-type D-methionine transporter activity"/>
    <property type="evidence" value="ECO:0007669"/>
    <property type="project" value="UniProtKB-EC"/>
</dbReference>
<dbReference type="GO" id="GO:0005524">
    <property type="term" value="F:ATP binding"/>
    <property type="evidence" value="ECO:0007669"/>
    <property type="project" value="UniProtKB-KW"/>
</dbReference>
<dbReference type="GO" id="GO:0016887">
    <property type="term" value="F:ATP hydrolysis activity"/>
    <property type="evidence" value="ECO:0007669"/>
    <property type="project" value="InterPro"/>
</dbReference>
<dbReference type="CDD" id="cd03258">
    <property type="entry name" value="ABC_MetN_methionine_transporter"/>
    <property type="match status" value="1"/>
</dbReference>
<dbReference type="FunFam" id="3.40.50.300:FF:000056">
    <property type="entry name" value="Cell division ATP-binding protein FtsE"/>
    <property type="match status" value="1"/>
</dbReference>
<dbReference type="Gene3D" id="3.30.70.260">
    <property type="match status" value="1"/>
</dbReference>
<dbReference type="Gene3D" id="3.40.50.300">
    <property type="entry name" value="P-loop containing nucleotide triphosphate hydrolases"/>
    <property type="match status" value="1"/>
</dbReference>
<dbReference type="InterPro" id="IPR003593">
    <property type="entry name" value="AAA+_ATPase"/>
</dbReference>
<dbReference type="InterPro" id="IPR003439">
    <property type="entry name" value="ABC_transporter-like_ATP-bd"/>
</dbReference>
<dbReference type="InterPro" id="IPR017871">
    <property type="entry name" value="ABC_transporter-like_CS"/>
</dbReference>
<dbReference type="InterPro" id="IPR045865">
    <property type="entry name" value="ACT-like_dom_sf"/>
</dbReference>
<dbReference type="InterPro" id="IPR041701">
    <property type="entry name" value="MetN_ABC"/>
</dbReference>
<dbReference type="InterPro" id="IPR050086">
    <property type="entry name" value="MetN_ABC_transporter-like"/>
</dbReference>
<dbReference type="InterPro" id="IPR018449">
    <property type="entry name" value="NIL_domain"/>
</dbReference>
<dbReference type="InterPro" id="IPR027417">
    <property type="entry name" value="P-loop_NTPase"/>
</dbReference>
<dbReference type="PANTHER" id="PTHR43166">
    <property type="entry name" value="AMINO ACID IMPORT ATP-BINDING PROTEIN"/>
    <property type="match status" value="1"/>
</dbReference>
<dbReference type="PANTHER" id="PTHR43166:SF30">
    <property type="entry name" value="METHIONINE IMPORT ATP-BINDING PROTEIN METN"/>
    <property type="match status" value="1"/>
</dbReference>
<dbReference type="Pfam" id="PF00005">
    <property type="entry name" value="ABC_tran"/>
    <property type="match status" value="1"/>
</dbReference>
<dbReference type="Pfam" id="PF09383">
    <property type="entry name" value="NIL"/>
    <property type="match status" value="1"/>
</dbReference>
<dbReference type="SMART" id="SM00382">
    <property type="entry name" value="AAA"/>
    <property type="match status" value="1"/>
</dbReference>
<dbReference type="SMART" id="SM00930">
    <property type="entry name" value="NIL"/>
    <property type="match status" value="1"/>
</dbReference>
<dbReference type="SUPFAM" id="SSF55021">
    <property type="entry name" value="ACT-like"/>
    <property type="match status" value="1"/>
</dbReference>
<dbReference type="SUPFAM" id="SSF52540">
    <property type="entry name" value="P-loop containing nucleoside triphosphate hydrolases"/>
    <property type="match status" value="1"/>
</dbReference>
<dbReference type="PROSITE" id="PS00211">
    <property type="entry name" value="ABC_TRANSPORTER_1"/>
    <property type="match status" value="1"/>
</dbReference>
<dbReference type="PROSITE" id="PS50893">
    <property type="entry name" value="ABC_TRANSPORTER_2"/>
    <property type="match status" value="1"/>
</dbReference>
<dbReference type="PROSITE" id="PS51264">
    <property type="entry name" value="METN"/>
    <property type="match status" value="1"/>
</dbReference>
<comment type="function">
    <text evidence="1">Part of the ABC transporter complex MetNIQ involved in methionine import. Responsible for energy coupling to the transport system.</text>
</comment>
<comment type="catalytic activity">
    <reaction evidence="1">
        <text>L-methionine(out) + ATP + H2O = L-methionine(in) + ADP + phosphate + H(+)</text>
        <dbReference type="Rhea" id="RHEA:29779"/>
        <dbReference type="ChEBI" id="CHEBI:15377"/>
        <dbReference type="ChEBI" id="CHEBI:15378"/>
        <dbReference type="ChEBI" id="CHEBI:30616"/>
        <dbReference type="ChEBI" id="CHEBI:43474"/>
        <dbReference type="ChEBI" id="CHEBI:57844"/>
        <dbReference type="ChEBI" id="CHEBI:456216"/>
        <dbReference type="EC" id="7.4.2.11"/>
    </reaction>
</comment>
<comment type="catalytic activity">
    <reaction evidence="1">
        <text>D-methionine(out) + ATP + H2O = D-methionine(in) + ADP + phosphate + H(+)</text>
        <dbReference type="Rhea" id="RHEA:29767"/>
        <dbReference type="ChEBI" id="CHEBI:15377"/>
        <dbReference type="ChEBI" id="CHEBI:15378"/>
        <dbReference type="ChEBI" id="CHEBI:30616"/>
        <dbReference type="ChEBI" id="CHEBI:43474"/>
        <dbReference type="ChEBI" id="CHEBI:57932"/>
        <dbReference type="ChEBI" id="CHEBI:456216"/>
        <dbReference type="EC" id="7.4.2.11"/>
    </reaction>
</comment>
<comment type="subunit">
    <text evidence="1">The complex is composed of two ATP-binding proteins (MetN), two transmembrane proteins (MetI) and a solute-binding protein (MetQ).</text>
</comment>
<comment type="subcellular location">
    <subcellularLocation>
        <location evidence="1">Cell inner membrane</location>
        <topology evidence="1">Peripheral membrane protein</topology>
    </subcellularLocation>
</comment>
<comment type="similarity">
    <text evidence="1">Belongs to the ABC transporter superfamily. Methionine importer (TC 3.A.1.24) family.</text>
</comment>
<accession>Q8ZR89</accession>
<keyword id="KW-0029">Amino-acid transport</keyword>
<keyword id="KW-0067">ATP-binding</keyword>
<keyword id="KW-0997">Cell inner membrane</keyword>
<keyword id="KW-1003">Cell membrane</keyword>
<keyword id="KW-0472">Membrane</keyword>
<keyword id="KW-0547">Nucleotide-binding</keyword>
<keyword id="KW-1185">Reference proteome</keyword>
<keyword id="KW-1278">Translocase</keyword>
<keyword id="KW-0813">Transport</keyword>
<gene>
    <name evidence="1" type="primary">metN2</name>
    <name type="ordered locus">STM0511</name>
</gene>
<organism>
    <name type="scientific">Salmonella typhimurium (strain LT2 / SGSC1412 / ATCC 700720)</name>
    <dbReference type="NCBI Taxonomy" id="99287"/>
    <lineage>
        <taxon>Bacteria</taxon>
        <taxon>Pseudomonadati</taxon>
        <taxon>Pseudomonadota</taxon>
        <taxon>Gammaproteobacteria</taxon>
        <taxon>Enterobacterales</taxon>
        <taxon>Enterobacteriaceae</taxon>
        <taxon>Salmonella</taxon>
    </lineage>
</organism>
<sequence length="338" mass="36431">MIEIEKVCVDFTAGRGTPTRAVDDVSLHIAAGEIFGIVGTSGAGKSTLLRTLNALTRPSQGRVNVNGVEISALDGKALRQARQRIGMIFQHFNLMHTRTVAQNVAFSLKAAGWERSKIAPRVAEILTLVGLADKANRFPVQLSGGQKQRVGIARAIANHPDVLLCDEPTSALDLETSATILALLRQINAQLGITIVLITHEMNVIKSICDRVAVMSGGKVVESGEVFDVFAHPQHAFTQQLVSHTLNLTLPERLREHLPGQLLKILFIGDSAEQPVLSEVAIKFGVAVNILHGKIEYIGERALGILVVQLTAPHNPTAVAAAVEHIRQRTAQVEVIRG</sequence>
<protein>
    <recommendedName>
        <fullName evidence="1">Methionine import ATP-binding protein MetN 2</fullName>
        <ecNumber evidence="1">7.4.2.11</ecNumber>
    </recommendedName>
</protein>
<reference key="1">
    <citation type="journal article" date="2001" name="Nature">
        <title>Complete genome sequence of Salmonella enterica serovar Typhimurium LT2.</title>
        <authorList>
            <person name="McClelland M."/>
            <person name="Sanderson K.E."/>
            <person name="Spieth J."/>
            <person name="Clifton S.W."/>
            <person name="Latreille P."/>
            <person name="Courtney L."/>
            <person name="Porwollik S."/>
            <person name="Ali J."/>
            <person name="Dante M."/>
            <person name="Du F."/>
            <person name="Hou S."/>
            <person name="Layman D."/>
            <person name="Leonard S."/>
            <person name="Nguyen C."/>
            <person name="Scott K."/>
            <person name="Holmes A."/>
            <person name="Grewal N."/>
            <person name="Mulvaney E."/>
            <person name="Ryan E."/>
            <person name="Sun H."/>
            <person name="Florea L."/>
            <person name="Miller W."/>
            <person name="Stoneking T."/>
            <person name="Nhan M."/>
            <person name="Waterston R."/>
            <person name="Wilson R.K."/>
        </authorList>
    </citation>
    <scope>NUCLEOTIDE SEQUENCE [LARGE SCALE GENOMIC DNA]</scope>
    <source>
        <strain>LT2 / SGSC1412 / ATCC 700720</strain>
    </source>
</reference>
<proteinExistence type="inferred from homology"/>
<name>METN2_SALTY</name>